<protein>
    <recommendedName>
        <fullName evidence="1">3-ketosteroid-9-alpha-monooxygenase, ferredoxin reductase component</fullName>
    </recommendedName>
    <alternativeName>
        <fullName evidence="1">3-ketosteroid-9-alpha-hydroxylase, ferredoxin reductase component</fullName>
        <shortName evidence="1">KSH</shortName>
    </alternativeName>
    <alternativeName>
        <fullName evidence="1">Androsta-1,4-diene-3,17-dione 9-alpha-hydroxylase</fullName>
        <ecNumber evidence="1">1.14.15.30</ecNumber>
    </alternativeName>
    <alternativeName>
        <fullName evidence="1">Rieske-type oxygenase</fullName>
        <shortName evidence="1">RO</shortName>
    </alternativeName>
</protein>
<sequence>MTEAIGDEPLGDHVLELQIAEVVDETDEARSLVFAVPDGSDDPEIPPRRLRYAPGQFLTLRVPSERTGSVARCYSLCSSPYTDDALAVTVKRTADGYASNWLCDHAQVGMRIHVLAPSGNFVPTTLDADFLLLAAGSGITPIMSICKSALAEGGGQVTLLYANRDDRSVIFGDALRELAAKYPDRLTVLHWLESLQGLPSASALAKLVAPYTDRPVFICGPGPFMQAARDALAALKVPAQQVHIEVFKSLESDPFAAVKVDDSGDEAPATAVVELDGQTHTVSWPRTAKLLDVLLAAGLDAPFSCREGHCGACACTLRAGKVNMGVNDVLEQQDLDEGLILACQSRPESDSVEVTYDE</sequence>
<comment type="function">
    <text evidence="1">Involved in the degradation of cholesterol. Catalyzes the introduction of a 9a-hydroxyl moiety into 1,4-androstadiene-3,17-dione (ADD) to yield the 9alpha-hydroxy-1,4-androstadiene-3,17-dione (9OHADD) intermediate which spontaneously form 3-hydroxy-9,10-seconandrost-1,3,5(10)-triene-9,17-dione (HSA) via the meta-cleavage of ring B with concomitant aromatization of ring A.</text>
</comment>
<comment type="catalytic activity">
    <reaction evidence="1">
        <text>androsta-1,4-diene-3,17-dione + 2 reduced [2Fe-2S]-[ferredoxin] + O2 + 2 H(+) = 9alpha-hydroxyandrosta-1,4-diene-3,17-dione + 2 oxidized [2Fe-2S]-[ferredoxin] + H2O</text>
        <dbReference type="Rhea" id="RHEA:32199"/>
        <dbReference type="Rhea" id="RHEA-COMP:10000"/>
        <dbReference type="Rhea" id="RHEA-COMP:10001"/>
        <dbReference type="ChEBI" id="CHEBI:15377"/>
        <dbReference type="ChEBI" id="CHEBI:15378"/>
        <dbReference type="ChEBI" id="CHEBI:15379"/>
        <dbReference type="ChEBI" id="CHEBI:33737"/>
        <dbReference type="ChEBI" id="CHEBI:33738"/>
        <dbReference type="ChEBI" id="CHEBI:40799"/>
        <dbReference type="ChEBI" id="CHEBI:63641"/>
        <dbReference type="EC" id="1.14.15.30"/>
    </reaction>
</comment>
<comment type="cofactor">
    <cofactor evidence="1">
        <name>FAD</name>
        <dbReference type="ChEBI" id="CHEBI:57692"/>
    </cofactor>
    <text evidence="1">Binds 1 FAD per subunit.</text>
</comment>
<comment type="cofactor">
    <cofactor evidence="2">
        <name>[2Fe-2S] cluster</name>
        <dbReference type="ChEBI" id="CHEBI:190135"/>
    </cofactor>
    <text evidence="2">Binds 1 2Fe-2S cluster.</text>
</comment>
<comment type="pathway">
    <text evidence="1">Lipid metabolism; steroid biosynthesis.</text>
</comment>
<comment type="subunit">
    <text evidence="1">Monomer. The two-component system 3-ketosteroid-9-alpha-monooxygenase is composed of an oxygenase component KshA and a reductase component KshB.</text>
</comment>
<comment type="induction">
    <text evidence="1">Induced by KstR.</text>
</comment>
<name>KSHB_MYCTO</name>
<keyword id="KW-0001">2Fe-2S</keyword>
<keyword id="KW-0153">Cholesterol metabolism</keyword>
<keyword id="KW-0274">FAD</keyword>
<keyword id="KW-0285">Flavoprotein</keyword>
<keyword id="KW-0408">Iron</keyword>
<keyword id="KW-0411">Iron-sulfur</keyword>
<keyword id="KW-0442">Lipid degradation</keyword>
<keyword id="KW-0443">Lipid metabolism</keyword>
<keyword id="KW-0479">Metal-binding</keyword>
<keyword id="KW-0560">Oxidoreductase</keyword>
<keyword id="KW-1185">Reference proteome</keyword>
<keyword id="KW-0753">Steroid metabolism</keyword>
<keyword id="KW-1207">Sterol metabolism</keyword>
<dbReference type="EC" id="1.14.15.30" evidence="1"/>
<dbReference type="EMBL" id="AE000516">
    <property type="protein sequence ID" value="AAK48035.1"/>
    <property type="molecule type" value="Genomic_DNA"/>
</dbReference>
<dbReference type="PIR" id="A70606">
    <property type="entry name" value="A70606"/>
</dbReference>
<dbReference type="RefSeq" id="WP_003900102.1">
    <property type="nucleotide sequence ID" value="NZ_KK341227.1"/>
</dbReference>
<dbReference type="SMR" id="P9WJ92"/>
<dbReference type="KEGG" id="mtc:MT3676"/>
<dbReference type="PATRIC" id="fig|83331.31.peg.3958"/>
<dbReference type="HOGENOM" id="CLU_003827_14_1_11"/>
<dbReference type="UniPathway" id="UPA00062"/>
<dbReference type="Proteomes" id="UP000001020">
    <property type="component" value="Chromosome"/>
</dbReference>
<dbReference type="GO" id="GO:0051537">
    <property type="term" value="F:2 iron, 2 sulfur cluster binding"/>
    <property type="evidence" value="ECO:0007669"/>
    <property type="project" value="UniProtKB-KW"/>
</dbReference>
<dbReference type="GO" id="GO:0036200">
    <property type="term" value="F:3-ketosteroid 9-alpha-monooxygenase activity"/>
    <property type="evidence" value="ECO:0007669"/>
    <property type="project" value="UniProtKB-EC"/>
</dbReference>
<dbReference type="GO" id="GO:0050660">
    <property type="term" value="F:flavin adenine dinucleotide binding"/>
    <property type="evidence" value="ECO:0007669"/>
    <property type="project" value="TreeGrafter"/>
</dbReference>
<dbReference type="GO" id="GO:0046872">
    <property type="term" value="F:metal ion binding"/>
    <property type="evidence" value="ECO:0007669"/>
    <property type="project" value="UniProtKB-KW"/>
</dbReference>
<dbReference type="GO" id="GO:0008203">
    <property type="term" value="P:cholesterol metabolic process"/>
    <property type="evidence" value="ECO:0007669"/>
    <property type="project" value="UniProtKB-KW"/>
</dbReference>
<dbReference type="GO" id="GO:0016042">
    <property type="term" value="P:lipid catabolic process"/>
    <property type="evidence" value="ECO:0007669"/>
    <property type="project" value="UniProtKB-KW"/>
</dbReference>
<dbReference type="GO" id="GO:0006694">
    <property type="term" value="P:steroid biosynthetic process"/>
    <property type="evidence" value="ECO:0007669"/>
    <property type="project" value="UniProtKB-UniPathway"/>
</dbReference>
<dbReference type="CDD" id="cd00207">
    <property type="entry name" value="fer2"/>
    <property type="match status" value="1"/>
</dbReference>
<dbReference type="CDD" id="cd06214">
    <property type="entry name" value="PA_degradation_oxidoreductase_like"/>
    <property type="match status" value="1"/>
</dbReference>
<dbReference type="FunFam" id="3.10.20.30:FF:000023">
    <property type="entry name" value="3-ketosteroid-9-alpha-hydroxylase reductase subunit"/>
    <property type="match status" value="1"/>
</dbReference>
<dbReference type="FunFam" id="2.40.30.10:FF:000133">
    <property type="entry name" value="Flavodoxin reductase Hmp"/>
    <property type="match status" value="1"/>
</dbReference>
<dbReference type="FunFam" id="3.40.50.80:FF:000044">
    <property type="entry name" value="Ring-1,2-phenylacetyl-CoA epoxidase subunit PaaE"/>
    <property type="match status" value="1"/>
</dbReference>
<dbReference type="Gene3D" id="3.10.20.30">
    <property type="match status" value="1"/>
</dbReference>
<dbReference type="Gene3D" id="3.40.50.80">
    <property type="entry name" value="Nucleotide-binding domain of ferredoxin-NADP reductase (FNR) module"/>
    <property type="match status" value="1"/>
</dbReference>
<dbReference type="Gene3D" id="2.40.30.10">
    <property type="entry name" value="Translation factors"/>
    <property type="match status" value="1"/>
</dbReference>
<dbReference type="InterPro" id="IPR036010">
    <property type="entry name" value="2Fe-2S_ferredoxin-like_sf"/>
</dbReference>
<dbReference type="InterPro" id="IPR001041">
    <property type="entry name" value="2Fe-2S_ferredoxin-type"/>
</dbReference>
<dbReference type="InterPro" id="IPR006058">
    <property type="entry name" value="2Fe2S_fd_BS"/>
</dbReference>
<dbReference type="InterPro" id="IPR012675">
    <property type="entry name" value="Beta-grasp_dom_sf"/>
</dbReference>
<dbReference type="InterPro" id="IPR008333">
    <property type="entry name" value="Cbr1-like_FAD-bd_dom"/>
</dbReference>
<dbReference type="InterPro" id="IPR017927">
    <property type="entry name" value="FAD-bd_FR_type"/>
</dbReference>
<dbReference type="InterPro" id="IPR001709">
    <property type="entry name" value="Flavoprot_Pyr_Nucl_cyt_Rdtase"/>
</dbReference>
<dbReference type="InterPro" id="IPR039261">
    <property type="entry name" value="FNR_nucleotide-bd"/>
</dbReference>
<dbReference type="InterPro" id="IPR050415">
    <property type="entry name" value="MRET"/>
</dbReference>
<dbReference type="InterPro" id="IPR001433">
    <property type="entry name" value="OxRdtase_FAD/NAD-bd"/>
</dbReference>
<dbReference type="InterPro" id="IPR017938">
    <property type="entry name" value="Riboflavin_synthase-like_b-brl"/>
</dbReference>
<dbReference type="PANTHER" id="PTHR47354:SF8">
    <property type="entry name" value="1,2-PHENYLACETYL-COA EPOXIDASE, SUBUNIT E"/>
    <property type="match status" value="1"/>
</dbReference>
<dbReference type="PANTHER" id="PTHR47354">
    <property type="entry name" value="NADH OXIDOREDUCTASE HCR"/>
    <property type="match status" value="1"/>
</dbReference>
<dbReference type="Pfam" id="PF00970">
    <property type="entry name" value="FAD_binding_6"/>
    <property type="match status" value="1"/>
</dbReference>
<dbReference type="Pfam" id="PF00111">
    <property type="entry name" value="Fer2"/>
    <property type="match status" value="1"/>
</dbReference>
<dbReference type="Pfam" id="PF00175">
    <property type="entry name" value="NAD_binding_1"/>
    <property type="match status" value="1"/>
</dbReference>
<dbReference type="PRINTS" id="PR00371">
    <property type="entry name" value="FPNCR"/>
</dbReference>
<dbReference type="PRINTS" id="PR00410">
    <property type="entry name" value="PHEHYDRXLASE"/>
</dbReference>
<dbReference type="SUPFAM" id="SSF54292">
    <property type="entry name" value="2Fe-2S ferredoxin-like"/>
    <property type="match status" value="1"/>
</dbReference>
<dbReference type="SUPFAM" id="SSF52343">
    <property type="entry name" value="Ferredoxin reductase-like, C-terminal NADP-linked domain"/>
    <property type="match status" value="1"/>
</dbReference>
<dbReference type="SUPFAM" id="SSF63380">
    <property type="entry name" value="Riboflavin synthase domain-like"/>
    <property type="match status" value="1"/>
</dbReference>
<dbReference type="PROSITE" id="PS00197">
    <property type="entry name" value="2FE2S_FER_1"/>
    <property type="match status" value="1"/>
</dbReference>
<dbReference type="PROSITE" id="PS51085">
    <property type="entry name" value="2FE2S_FER_2"/>
    <property type="match status" value="1"/>
</dbReference>
<dbReference type="PROSITE" id="PS51384">
    <property type="entry name" value="FAD_FR"/>
    <property type="match status" value="1"/>
</dbReference>
<accession>P9WJ92</accession>
<accession>L0TD71</accession>
<accession>P96853</accession>
<accession>Q7D594</accession>
<organism>
    <name type="scientific">Mycobacterium tuberculosis (strain CDC 1551 / Oshkosh)</name>
    <dbReference type="NCBI Taxonomy" id="83331"/>
    <lineage>
        <taxon>Bacteria</taxon>
        <taxon>Bacillati</taxon>
        <taxon>Actinomycetota</taxon>
        <taxon>Actinomycetes</taxon>
        <taxon>Mycobacteriales</taxon>
        <taxon>Mycobacteriaceae</taxon>
        <taxon>Mycobacterium</taxon>
        <taxon>Mycobacterium tuberculosis complex</taxon>
    </lineage>
</organism>
<proteinExistence type="inferred from homology"/>
<reference key="1">
    <citation type="journal article" date="2002" name="J. Bacteriol.">
        <title>Whole-genome comparison of Mycobacterium tuberculosis clinical and laboratory strains.</title>
        <authorList>
            <person name="Fleischmann R.D."/>
            <person name="Alland D."/>
            <person name="Eisen J.A."/>
            <person name="Carpenter L."/>
            <person name="White O."/>
            <person name="Peterson J.D."/>
            <person name="DeBoy R.T."/>
            <person name="Dodson R.J."/>
            <person name="Gwinn M.L."/>
            <person name="Haft D.H."/>
            <person name="Hickey E.K."/>
            <person name="Kolonay J.F."/>
            <person name="Nelson W.C."/>
            <person name="Umayam L.A."/>
            <person name="Ermolaeva M.D."/>
            <person name="Salzberg S.L."/>
            <person name="Delcher A."/>
            <person name="Utterback T.R."/>
            <person name="Weidman J.F."/>
            <person name="Khouri H.M."/>
            <person name="Gill J."/>
            <person name="Mikula A."/>
            <person name="Bishai W."/>
            <person name="Jacobs W.R. Jr."/>
            <person name="Venter J.C."/>
            <person name="Fraser C.M."/>
        </authorList>
    </citation>
    <scope>NUCLEOTIDE SEQUENCE [LARGE SCALE GENOMIC DNA]</scope>
    <source>
        <strain>CDC 1551 / Oshkosh</strain>
    </source>
</reference>
<gene>
    <name type="primary">hmp</name>
    <name type="synonym">kshB</name>
    <name type="ordered locus">MT3676</name>
</gene>
<evidence type="ECO:0000250" key="1">
    <source>
        <dbReference type="UniProtKB" id="P9WJ93"/>
    </source>
</evidence>
<evidence type="ECO:0000255" key="2">
    <source>
        <dbReference type="PROSITE-ProRule" id="PRU00465"/>
    </source>
</evidence>
<evidence type="ECO:0000255" key="3">
    <source>
        <dbReference type="PROSITE-ProRule" id="PRU00716"/>
    </source>
</evidence>
<feature type="chain" id="PRO_0000427870" description="3-ketosteroid-9-alpha-monooxygenase, ferredoxin reductase component">
    <location>
        <begin position="1"/>
        <end position="358"/>
    </location>
</feature>
<feature type="domain" description="FAD-binding FR-type" evidence="3">
    <location>
        <begin position="12"/>
        <end position="124"/>
    </location>
</feature>
<feature type="domain" description="2Fe-2S ferredoxin-type" evidence="2">
    <location>
        <begin position="269"/>
        <end position="358"/>
    </location>
</feature>
<feature type="binding site" evidence="2">
    <location>
        <position position="305"/>
    </location>
    <ligand>
        <name>[2Fe-2S] cluster</name>
        <dbReference type="ChEBI" id="CHEBI:190135"/>
    </ligand>
</feature>
<feature type="binding site" evidence="2">
    <location>
        <position position="310"/>
    </location>
    <ligand>
        <name>[2Fe-2S] cluster</name>
        <dbReference type="ChEBI" id="CHEBI:190135"/>
    </ligand>
</feature>
<feature type="binding site" evidence="2">
    <location>
        <position position="313"/>
    </location>
    <ligand>
        <name>[2Fe-2S] cluster</name>
        <dbReference type="ChEBI" id="CHEBI:190135"/>
    </ligand>
</feature>
<feature type="binding site" evidence="2">
    <location>
        <position position="343"/>
    </location>
    <ligand>
        <name>[2Fe-2S] cluster</name>
        <dbReference type="ChEBI" id="CHEBI:190135"/>
    </ligand>
</feature>